<reference key="1">
    <citation type="journal article" date="2002" name="Gene">
        <title>Cloning and characterization of a gene (avaA) from Aspergillus nidulans encoding a small GTPase involved in vacuolar biogenesis.</title>
        <authorList>
            <person name="Ohsumi K."/>
            <person name="Arioka M."/>
            <person name="Nakajima H."/>
            <person name="Kitamoto K."/>
        </authorList>
    </citation>
    <scope>NUCLEOTIDE SEQUENCE [GENOMIC DNA]</scope>
    <scope>FUNCTION</scope>
    <scope>DISRUPTION PHENOTYPE</scope>
    <scope>MUTAGENESIS OF THR-22 AND GLN-67</scope>
    <source>
        <strain>FGSC A26 / ATCC 24756 / JCM 19074 / M804</strain>
    </source>
</reference>
<reference key="2">
    <citation type="journal article" date="2005" name="Nature">
        <title>Sequencing of Aspergillus nidulans and comparative analysis with A. fumigatus and A. oryzae.</title>
        <authorList>
            <person name="Galagan J.E."/>
            <person name="Calvo S.E."/>
            <person name="Cuomo C."/>
            <person name="Ma L.-J."/>
            <person name="Wortman J.R."/>
            <person name="Batzoglou S."/>
            <person name="Lee S.-I."/>
            <person name="Bastuerkmen M."/>
            <person name="Spevak C.C."/>
            <person name="Clutterbuck J."/>
            <person name="Kapitonov V."/>
            <person name="Jurka J."/>
            <person name="Scazzocchio C."/>
            <person name="Farman M.L."/>
            <person name="Butler J."/>
            <person name="Purcell S."/>
            <person name="Harris S."/>
            <person name="Braus G.H."/>
            <person name="Draht O."/>
            <person name="Busch S."/>
            <person name="D'Enfert C."/>
            <person name="Bouchier C."/>
            <person name="Goldman G.H."/>
            <person name="Bell-Pedersen D."/>
            <person name="Griffiths-Jones S."/>
            <person name="Doonan J.H."/>
            <person name="Yu J."/>
            <person name="Vienken K."/>
            <person name="Pain A."/>
            <person name="Freitag M."/>
            <person name="Selker E.U."/>
            <person name="Archer D.B."/>
            <person name="Penalva M.A."/>
            <person name="Oakley B.R."/>
            <person name="Momany M."/>
            <person name="Tanaka T."/>
            <person name="Kumagai T."/>
            <person name="Asai K."/>
            <person name="Machida M."/>
            <person name="Nierman W.C."/>
            <person name="Denning D.W."/>
            <person name="Caddick M.X."/>
            <person name="Hynes M."/>
            <person name="Paoletti M."/>
            <person name="Fischer R."/>
            <person name="Miller B.L."/>
            <person name="Dyer P.S."/>
            <person name="Sachs M.S."/>
            <person name="Osmani S.A."/>
            <person name="Birren B.W."/>
        </authorList>
    </citation>
    <scope>NUCLEOTIDE SEQUENCE [LARGE SCALE GENOMIC DNA]</scope>
    <source>
        <strain>FGSC A4 / ATCC 38163 / CBS 112.46 / NRRL 194 / M139</strain>
    </source>
</reference>
<reference key="3">
    <citation type="journal article" date="2009" name="Fungal Genet. Biol.">
        <title>The 2008 update of the Aspergillus nidulans genome annotation: a community effort.</title>
        <authorList>
            <person name="Wortman J.R."/>
            <person name="Gilsenan J.M."/>
            <person name="Joardar V."/>
            <person name="Deegan J."/>
            <person name="Clutterbuck J."/>
            <person name="Andersen M.R."/>
            <person name="Archer D."/>
            <person name="Bencina M."/>
            <person name="Braus G."/>
            <person name="Coutinho P."/>
            <person name="von Dohren H."/>
            <person name="Doonan J."/>
            <person name="Driessen A.J."/>
            <person name="Durek P."/>
            <person name="Espeso E."/>
            <person name="Fekete E."/>
            <person name="Flipphi M."/>
            <person name="Estrada C.G."/>
            <person name="Geysens S."/>
            <person name="Goldman G."/>
            <person name="de Groot P.W."/>
            <person name="Hansen K."/>
            <person name="Harris S.D."/>
            <person name="Heinekamp T."/>
            <person name="Helmstaedt K."/>
            <person name="Henrissat B."/>
            <person name="Hofmann G."/>
            <person name="Homan T."/>
            <person name="Horio T."/>
            <person name="Horiuchi H."/>
            <person name="James S."/>
            <person name="Jones M."/>
            <person name="Karaffa L."/>
            <person name="Karanyi Z."/>
            <person name="Kato M."/>
            <person name="Keller N."/>
            <person name="Kelly D.E."/>
            <person name="Kiel J.A."/>
            <person name="Kim J.M."/>
            <person name="van der Klei I.J."/>
            <person name="Klis F.M."/>
            <person name="Kovalchuk A."/>
            <person name="Krasevec N."/>
            <person name="Kubicek C.P."/>
            <person name="Liu B."/>
            <person name="Maccabe A."/>
            <person name="Meyer V."/>
            <person name="Mirabito P."/>
            <person name="Miskei M."/>
            <person name="Mos M."/>
            <person name="Mullins J."/>
            <person name="Nelson D.R."/>
            <person name="Nielsen J."/>
            <person name="Oakley B.R."/>
            <person name="Osmani S.A."/>
            <person name="Pakula T."/>
            <person name="Paszewski A."/>
            <person name="Paulsen I."/>
            <person name="Pilsyk S."/>
            <person name="Pocsi I."/>
            <person name="Punt P.J."/>
            <person name="Ram A.F."/>
            <person name="Ren Q."/>
            <person name="Robellet X."/>
            <person name="Robson G."/>
            <person name="Seiboth B."/>
            <person name="van Solingen P."/>
            <person name="Specht T."/>
            <person name="Sun J."/>
            <person name="Taheri-Talesh N."/>
            <person name="Takeshita N."/>
            <person name="Ussery D."/>
            <person name="vanKuyk P.A."/>
            <person name="Visser H."/>
            <person name="van de Vondervoort P.J."/>
            <person name="de Vries R.P."/>
            <person name="Walton J."/>
            <person name="Xiang X."/>
            <person name="Xiong Y."/>
            <person name="Zeng A.P."/>
            <person name="Brandt B.W."/>
            <person name="Cornell M.J."/>
            <person name="van den Hondel C.A."/>
            <person name="Visser J."/>
            <person name="Oliver S.G."/>
            <person name="Turner G."/>
        </authorList>
    </citation>
    <scope>GENOME REANNOTATION</scope>
    <source>
        <strain>FGSC A4 / ATCC 38163 / CBS 112.46 / NRRL 194 / M139</strain>
    </source>
</reference>
<organism>
    <name type="scientific">Emericella nidulans (strain FGSC A4 / ATCC 38163 / CBS 112.46 / NRRL 194 / M139)</name>
    <name type="common">Aspergillus nidulans</name>
    <dbReference type="NCBI Taxonomy" id="227321"/>
    <lineage>
        <taxon>Eukaryota</taxon>
        <taxon>Fungi</taxon>
        <taxon>Dikarya</taxon>
        <taxon>Ascomycota</taxon>
        <taxon>Pezizomycotina</taxon>
        <taxon>Eurotiomycetes</taxon>
        <taxon>Eurotiomycetidae</taxon>
        <taxon>Eurotiales</taxon>
        <taxon>Aspergillaceae</taxon>
        <taxon>Aspergillus</taxon>
        <taxon>Aspergillus subgen. Nidulantes</taxon>
    </lineage>
</organism>
<protein>
    <recommendedName>
        <fullName evidence="5">Ypt/Rab-type GTPase avaA</fullName>
    </recommendedName>
    <alternativeName>
        <fullName evidence="4">Aspergillus vacuolar morphology protein A</fullName>
    </alternativeName>
    <alternativeName>
        <fullName evidence="4">YPT7 homolog avaA</fullName>
    </alternativeName>
</protein>
<accession>C8VQY7</accession>
<accession>Q5BH91</accession>
<accession>Q8TGD9</accession>
<feature type="chain" id="PRO_0000451056" description="Ypt/Rab-type GTPase avaA">
    <location>
        <begin position="1"/>
        <end position="205"/>
    </location>
</feature>
<feature type="short sequence motif" description="Effector region" evidence="1">
    <location>
        <begin position="37"/>
        <end position="45"/>
    </location>
</feature>
<feature type="binding site" evidence="1">
    <location>
        <begin position="17"/>
        <end position="23"/>
    </location>
    <ligand>
        <name>GTP</name>
        <dbReference type="ChEBI" id="CHEBI:37565"/>
    </ligand>
</feature>
<feature type="binding site" evidence="1">
    <location>
        <begin position="33"/>
        <end position="40"/>
    </location>
    <ligand>
        <name>GTP</name>
        <dbReference type="ChEBI" id="CHEBI:37565"/>
    </ligand>
</feature>
<feature type="binding site" evidence="1">
    <location>
        <position position="66"/>
    </location>
    <ligand>
        <name>GTP</name>
        <dbReference type="ChEBI" id="CHEBI:37565"/>
    </ligand>
</feature>
<feature type="binding site" evidence="1">
    <location>
        <begin position="125"/>
        <end position="128"/>
    </location>
    <ligand>
        <name>GTP</name>
        <dbReference type="ChEBI" id="CHEBI:37565"/>
    </ligand>
</feature>
<feature type="binding site" evidence="1">
    <location>
        <begin position="157"/>
        <end position="159"/>
    </location>
    <ligand>
        <name>GTP</name>
        <dbReference type="ChEBI" id="CHEBI:37565"/>
    </ligand>
</feature>
<feature type="modified residue" description="Cysteine methyl ester" evidence="2">
    <location>
        <position position="205"/>
    </location>
</feature>
<feature type="lipid moiety-binding region" description="S-geranylgeranyl cysteine" evidence="2">
    <location>
        <position position="203"/>
    </location>
</feature>
<feature type="lipid moiety-binding region" description="S-geranylgeranyl cysteine" evidence="2">
    <location>
        <position position="205"/>
    </location>
</feature>
<feature type="mutagenesis site" description="Constitutively in the GDP-bound conformation. Causes loss of function during vacuolar morphogenesis." evidence="3">
    <original>T</original>
    <variation>N</variation>
    <location>
        <position position="22"/>
    </location>
</feature>
<feature type="mutagenesis site" description="Constitutively in the GTP-bound conformation. Promotes vacuolar fusion resulting in large swollen vacuoles." evidence="3">
    <original>Q</original>
    <variation>L</variation>
    <location>
        <position position="67"/>
    </location>
</feature>
<dbReference type="EMBL" id="AB072431">
    <property type="protein sequence ID" value="BAB88682.1"/>
    <property type="molecule type" value="Genomic_DNA"/>
</dbReference>
<dbReference type="EMBL" id="BN001308">
    <property type="protein sequence ID" value="CBF90222.1"/>
    <property type="molecule type" value="Genomic_DNA"/>
</dbReference>
<dbReference type="EMBL" id="AACD01000003">
    <property type="protein sequence ID" value="EAA65267.1"/>
    <property type="status" value="ALT_SEQ"/>
    <property type="molecule type" value="Genomic_DNA"/>
</dbReference>
<dbReference type="RefSeq" id="XP_657693.1">
    <property type="nucleotide sequence ID" value="XM_652601.1"/>
</dbReference>
<dbReference type="SMR" id="C8VQY7"/>
<dbReference type="FunCoup" id="C8VQY7">
    <property type="interactions" value="896"/>
</dbReference>
<dbReference type="STRING" id="227321.C8VQY7"/>
<dbReference type="EnsemblFungi" id="CBF90222">
    <property type="protein sequence ID" value="CBF90222"/>
    <property type="gene ID" value="ANIA_00089"/>
</dbReference>
<dbReference type="VEuPathDB" id="FungiDB:AN0089"/>
<dbReference type="eggNOG" id="KOG0394">
    <property type="taxonomic scope" value="Eukaryota"/>
</dbReference>
<dbReference type="HOGENOM" id="CLU_041217_10_6_1"/>
<dbReference type="InParanoid" id="C8VQY7"/>
<dbReference type="OMA" id="TSWKDEF"/>
<dbReference type="OrthoDB" id="9989112at2759"/>
<dbReference type="Proteomes" id="UP000000560">
    <property type="component" value="Chromosome VIII"/>
</dbReference>
<dbReference type="GO" id="GO:0000329">
    <property type="term" value="C:fungal-type vacuole membrane"/>
    <property type="evidence" value="ECO:0000318"/>
    <property type="project" value="GO_Central"/>
</dbReference>
<dbReference type="GO" id="GO:0005770">
    <property type="term" value="C:late endosome"/>
    <property type="evidence" value="ECO:0000318"/>
    <property type="project" value="GO_Central"/>
</dbReference>
<dbReference type="GO" id="GO:0005774">
    <property type="term" value="C:vacuolar membrane"/>
    <property type="evidence" value="ECO:0000314"/>
    <property type="project" value="AspGD"/>
</dbReference>
<dbReference type="GO" id="GO:0005773">
    <property type="term" value="C:vacuole"/>
    <property type="evidence" value="ECO:0000318"/>
    <property type="project" value="GO_Central"/>
</dbReference>
<dbReference type="GO" id="GO:0005525">
    <property type="term" value="F:GTP binding"/>
    <property type="evidence" value="ECO:0007669"/>
    <property type="project" value="UniProtKB-KW"/>
</dbReference>
<dbReference type="GO" id="GO:0003924">
    <property type="term" value="F:GTPase activity"/>
    <property type="evidence" value="ECO:0007669"/>
    <property type="project" value="InterPro"/>
</dbReference>
<dbReference type="GO" id="GO:0007032">
    <property type="term" value="P:endosome organization"/>
    <property type="evidence" value="ECO:0000315"/>
    <property type="project" value="AspGD"/>
</dbReference>
<dbReference type="GO" id="GO:0032889">
    <property type="term" value="P:regulation of vacuole fusion, non-autophagic"/>
    <property type="evidence" value="ECO:0000318"/>
    <property type="project" value="GO_Central"/>
</dbReference>
<dbReference type="GO" id="GO:0042144">
    <property type="term" value="P:vacuole fusion, non-autophagic"/>
    <property type="evidence" value="ECO:0000315"/>
    <property type="project" value="AspGD"/>
</dbReference>
<dbReference type="CDD" id="cd01862">
    <property type="entry name" value="Rab7"/>
    <property type="match status" value="1"/>
</dbReference>
<dbReference type="FunFam" id="3.40.50.300:FF:000086">
    <property type="entry name" value="Ras-related small GTPase"/>
    <property type="match status" value="1"/>
</dbReference>
<dbReference type="Gene3D" id="3.40.50.300">
    <property type="entry name" value="P-loop containing nucleotide triphosphate hydrolases"/>
    <property type="match status" value="1"/>
</dbReference>
<dbReference type="InterPro" id="IPR027417">
    <property type="entry name" value="P-loop_NTPase"/>
</dbReference>
<dbReference type="InterPro" id="IPR005225">
    <property type="entry name" value="Small_GTP-bd"/>
</dbReference>
<dbReference type="InterPro" id="IPR001806">
    <property type="entry name" value="Small_GTPase"/>
</dbReference>
<dbReference type="NCBIfam" id="TIGR00231">
    <property type="entry name" value="small_GTP"/>
    <property type="match status" value="1"/>
</dbReference>
<dbReference type="PANTHER" id="PTHR47981">
    <property type="entry name" value="RAB FAMILY"/>
    <property type="match status" value="1"/>
</dbReference>
<dbReference type="PANTHER" id="PTHR47981:SF20">
    <property type="entry name" value="RAS-RELATED PROTEIN RAB-7A"/>
    <property type="match status" value="1"/>
</dbReference>
<dbReference type="Pfam" id="PF00071">
    <property type="entry name" value="Ras"/>
    <property type="match status" value="1"/>
</dbReference>
<dbReference type="PRINTS" id="PR00449">
    <property type="entry name" value="RASTRNSFRMNG"/>
</dbReference>
<dbReference type="SMART" id="SM00175">
    <property type="entry name" value="RAB"/>
    <property type="match status" value="1"/>
</dbReference>
<dbReference type="SMART" id="SM00176">
    <property type="entry name" value="RAN"/>
    <property type="match status" value="1"/>
</dbReference>
<dbReference type="SMART" id="SM00173">
    <property type="entry name" value="RAS"/>
    <property type="match status" value="1"/>
</dbReference>
<dbReference type="SMART" id="SM00174">
    <property type="entry name" value="RHO"/>
    <property type="match status" value="1"/>
</dbReference>
<dbReference type="SUPFAM" id="SSF52540">
    <property type="entry name" value="P-loop containing nucleoside triphosphate hydrolases"/>
    <property type="match status" value="1"/>
</dbReference>
<dbReference type="PROSITE" id="PS51419">
    <property type="entry name" value="RAB"/>
    <property type="match status" value="1"/>
</dbReference>
<gene>
    <name evidence="4" type="primary">avaA</name>
    <name type="ORF">AN0089</name>
    <name type="ORF">ANIA_00089</name>
</gene>
<name>YPT7_EMENI</name>
<keyword id="KW-0342">GTP-binding</keyword>
<keyword id="KW-0449">Lipoprotein</keyword>
<keyword id="KW-0488">Methylation</keyword>
<keyword id="KW-0547">Nucleotide-binding</keyword>
<keyword id="KW-0636">Prenylation</keyword>
<keyword id="KW-1185">Reference proteome</keyword>
<sequence>MSSRKKVMLKVIILGDSGVGKTSLMNQYVNKKFSGSYKATIGADFLTKEVLVDDRLVTMQIWDTAGQERFQSLGVAFYRGADCCVLVYDVNNSKSFEALDSWRDEFLIQASPRDPESFPFVVIGNKIDMEESKRMISSKRAMTFCQSKGNIPYFETSAKEAVNVEQAFEVIARSALAQEEAEEYGGDYTDPINIHDTTERDGCAC</sequence>
<evidence type="ECO:0000250" key="1">
    <source>
        <dbReference type="UniProtKB" id="P32939"/>
    </source>
</evidence>
<evidence type="ECO:0000250" key="2">
    <source>
        <dbReference type="UniProtKB" id="P36586"/>
    </source>
</evidence>
<evidence type="ECO:0000269" key="3">
    <source>
    </source>
</evidence>
<evidence type="ECO:0000303" key="4">
    <source>
    </source>
</evidence>
<evidence type="ECO:0000305" key="5"/>
<comment type="function">
    <text evidence="1 3">Ypt/Rab-type GTPases are key regulators of membrane trafficking and intracellular vesicular transport. They act as molecular switches that convert between GTP-bound and GDP-bound states, and regulate virtually all steps of membrane traffic from the formation of the transport vesicle at the donor membrane to its fusion at the target membrane. In the GDP-bound state, Ypt proteins are predominantly cytosolic, solubilized through the interaction with a GDP dissociation inhibitor (GDI). In the GTP-bound state, the proteins are membrane bound and interact with specific effector proteins that select cargo, promote vesicle movement, or verify the correct site of fusion (By similarity). AvaA functions in vacuolar biogenesis (PubMed:12095681).</text>
</comment>
<comment type="activity regulation">
    <text evidence="1">Rab activation is generally mediated by a guanine exchange factor (GEF), while inactivation through hydrolysis of bound GTP is catalyzed by a GTPase activating protein (GAP).</text>
</comment>
<comment type="disruption phenotype">
    <text evidence="3">Displays highly fragmented vacuoles.</text>
</comment>
<comment type="similarity">
    <text evidence="5">Belongs to the small GTPase superfamily. Rab family.</text>
</comment>
<comment type="sequence caution" evidence="5">
    <conflict type="erroneous gene model prediction">
        <sequence resource="EMBL-CDS" id="EAA65267"/>
    </conflict>
</comment>
<proteinExistence type="evidence at protein level"/>